<evidence type="ECO:0000255" key="1">
    <source>
        <dbReference type="HAMAP-Rule" id="MF_01587"/>
    </source>
</evidence>
<evidence type="ECO:0000305" key="2"/>
<keyword id="KW-0227">DNA damage</keyword>
<keyword id="KW-0234">DNA repair</keyword>
<keyword id="KW-0235">DNA replication</keyword>
<keyword id="KW-0436">Ligase</keyword>
<keyword id="KW-0520">NAD</keyword>
<keyword id="KW-1185">Reference proteome</keyword>
<reference key="1">
    <citation type="journal article" date="2008" name="Proc. Natl. Acad. Sci. U.S.A.">
        <title>Nitrogen fixation island and rhizosphere competence traits in the genome of root-associated Pseudomonas stutzeri A1501.</title>
        <authorList>
            <person name="Yan Y."/>
            <person name="Yang J."/>
            <person name="Dou Y."/>
            <person name="Chen M."/>
            <person name="Ping S."/>
            <person name="Peng J."/>
            <person name="Lu W."/>
            <person name="Zhang W."/>
            <person name="Yao Z."/>
            <person name="Li H."/>
            <person name="Liu W."/>
            <person name="He S."/>
            <person name="Geng L."/>
            <person name="Zhang X."/>
            <person name="Yang F."/>
            <person name="Yu H."/>
            <person name="Zhan Y."/>
            <person name="Li D."/>
            <person name="Lin Z."/>
            <person name="Wang Y."/>
            <person name="Elmerich C."/>
            <person name="Lin M."/>
            <person name="Jin Q."/>
        </authorList>
    </citation>
    <scope>NUCLEOTIDE SEQUENCE [LARGE SCALE GENOMIC DNA]</scope>
    <source>
        <strain>A1501</strain>
    </source>
</reference>
<proteinExistence type="inferred from homology"/>
<comment type="function">
    <text evidence="1">Catalyzes the formation of phosphodiester linkages between 5'-phosphoryl and 3'-hydroxyl groups in double-stranded DNA using NAD as a coenzyme and as the energy source for the reaction.</text>
</comment>
<comment type="catalytic activity">
    <reaction evidence="1">
        <text>NAD(+) + (deoxyribonucleotide)n-3'-hydroxyl + 5'-phospho-(deoxyribonucleotide)m = (deoxyribonucleotide)n+m + AMP + beta-nicotinamide D-nucleotide.</text>
        <dbReference type="EC" id="6.5.1.2"/>
    </reaction>
</comment>
<comment type="similarity">
    <text evidence="1">Belongs to the NAD-dependent DNA ligase family. LigB subfamily.</text>
</comment>
<comment type="sequence caution" evidence="2">
    <conflict type="erroneous initiation">
        <sequence resource="EMBL-CDS" id="ABP81554"/>
    </conflict>
</comment>
<sequence length="556" mass="61551">MLAMPRLITLSLCLFAPACLATCPNWDDARARQEIHQLQAQLAQWDDAYHRRGQSLVDDEIYDQSRAQLDGWRRCFVGTGAAPDPLQDAGGPLRHPVRQTGLVKLADEQAVATWIARRRDLWIQPKIDGVAVTLVYRHGALQQAISRGDGLTGHDWTANARRLAAIPARLAVPDEVILQGELYWRLDRHVQASHGSAGARGRVAGAMASNGLDRNTAARIGLFVWDWPNGPDSMNARLGQLAALGFPDTQAFSQPVETLEHARHWREHWYRQALPFATDGVVLRQEQRPPAERWQAEPHWAAAWKYPLRKALTEVRDVEFRIGRTGRITPLLQLAPVQLDDRRVRMLSLGSLDRWQALDVRPGDRVAVALAGHSIPQLDSVVWRHTERAPVAAPDPRRYHPDSCWRPAPGCEQQFLARLVWLGGRQGLALEGVGAGSWQALLEAGLLPDLLAWLELDAAALEQVPGIGKARANKLAASFARARQRPLAQWLKALGLPAKQLPPAADWDALAARDLAQWQAEAGVGPARAKQLQAFFRAAELPALRERLRAVGVPGT</sequence>
<accession>A4VRF3</accession>
<gene>
    <name evidence="1" type="primary">ligB</name>
    <name type="ordered locus">PST_3931</name>
</gene>
<dbReference type="EC" id="6.5.1.2" evidence="1"/>
<dbReference type="EMBL" id="CP000304">
    <property type="protein sequence ID" value="ABP81554.1"/>
    <property type="status" value="ALT_INIT"/>
    <property type="molecule type" value="Genomic_DNA"/>
</dbReference>
<dbReference type="SMR" id="A4VRF3"/>
<dbReference type="KEGG" id="psa:PST_3931"/>
<dbReference type="eggNOG" id="COG0272">
    <property type="taxonomic scope" value="Bacteria"/>
</dbReference>
<dbReference type="HOGENOM" id="CLU_489786_0_0_6"/>
<dbReference type="Proteomes" id="UP000000233">
    <property type="component" value="Chromosome"/>
</dbReference>
<dbReference type="GO" id="GO:0003911">
    <property type="term" value="F:DNA ligase (NAD+) activity"/>
    <property type="evidence" value="ECO:0007669"/>
    <property type="project" value="UniProtKB-UniRule"/>
</dbReference>
<dbReference type="GO" id="GO:0006281">
    <property type="term" value="P:DNA repair"/>
    <property type="evidence" value="ECO:0007669"/>
    <property type="project" value="UniProtKB-KW"/>
</dbReference>
<dbReference type="GO" id="GO:0006260">
    <property type="term" value="P:DNA replication"/>
    <property type="evidence" value="ECO:0007669"/>
    <property type="project" value="UniProtKB-KW"/>
</dbReference>
<dbReference type="Gene3D" id="1.10.150.20">
    <property type="entry name" value="5' to 3' exonuclease, C-terminal subdomain"/>
    <property type="match status" value="1"/>
</dbReference>
<dbReference type="Gene3D" id="3.30.470.30">
    <property type="entry name" value="DNA ligase/mRNA capping enzyme"/>
    <property type="match status" value="1"/>
</dbReference>
<dbReference type="Gene3D" id="1.10.287.610">
    <property type="entry name" value="Helix hairpin bin"/>
    <property type="match status" value="1"/>
</dbReference>
<dbReference type="Gene3D" id="2.40.50.140">
    <property type="entry name" value="Nucleic acid-binding proteins"/>
    <property type="match status" value="1"/>
</dbReference>
<dbReference type="HAMAP" id="MF_01587">
    <property type="entry name" value="DNA_ligase_B"/>
    <property type="match status" value="1"/>
</dbReference>
<dbReference type="InterPro" id="IPR001679">
    <property type="entry name" value="DNA_ligase"/>
</dbReference>
<dbReference type="InterPro" id="IPR020923">
    <property type="entry name" value="DNA_ligase_B"/>
</dbReference>
<dbReference type="InterPro" id="IPR033136">
    <property type="entry name" value="DNA_ligase_CS"/>
</dbReference>
<dbReference type="InterPro" id="IPR013839">
    <property type="entry name" value="DNAligase_adenylation"/>
</dbReference>
<dbReference type="InterPro" id="IPR013840">
    <property type="entry name" value="DNAligase_N"/>
</dbReference>
<dbReference type="InterPro" id="IPR012340">
    <property type="entry name" value="NA-bd_OB-fold"/>
</dbReference>
<dbReference type="InterPro" id="IPR050326">
    <property type="entry name" value="NAD_dep_DNA_ligaseB"/>
</dbReference>
<dbReference type="InterPro" id="IPR004150">
    <property type="entry name" value="NAD_DNA_ligase_OB"/>
</dbReference>
<dbReference type="InterPro" id="IPR010994">
    <property type="entry name" value="RuvA_2-like"/>
</dbReference>
<dbReference type="NCBIfam" id="NF005987">
    <property type="entry name" value="PRK08097.1"/>
    <property type="match status" value="1"/>
</dbReference>
<dbReference type="PANTHER" id="PTHR47810">
    <property type="entry name" value="DNA LIGASE"/>
    <property type="match status" value="1"/>
</dbReference>
<dbReference type="PANTHER" id="PTHR47810:SF1">
    <property type="entry name" value="DNA LIGASE B"/>
    <property type="match status" value="1"/>
</dbReference>
<dbReference type="Pfam" id="PF01653">
    <property type="entry name" value="DNA_ligase_aden"/>
    <property type="match status" value="1"/>
</dbReference>
<dbReference type="Pfam" id="PF03120">
    <property type="entry name" value="DNA_ligase_OB"/>
    <property type="match status" value="1"/>
</dbReference>
<dbReference type="PIRSF" id="PIRSF001604">
    <property type="entry name" value="LigA"/>
    <property type="match status" value="1"/>
</dbReference>
<dbReference type="SMART" id="SM00532">
    <property type="entry name" value="LIGANc"/>
    <property type="match status" value="1"/>
</dbReference>
<dbReference type="SUPFAM" id="SSF56091">
    <property type="entry name" value="DNA ligase/mRNA capping enzyme, catalytic domain"/>
    <property type="match status" value="1"/>
</dbReference>
<dbReference type="SUPFAM" id="SSF50249">
    <property type="entry name" value="Nucleic acid-binding proteins"/>
    <property type="match status" value="1"/>
</dbReference>
<dbReference type="SUPFAM" id="SSF47781">
    <property type="entry name" value="RuvA domain 2-like"/>
    <property type="match status" value="1"/>
</dbReference>
<dbReference type="PROSITE" id="PS01056">
    <property type="entry name" value="DNA_LIGASE_N2"/>
    <property type="match status" value="1"/>
</dbReference>
<name>LIGB_STUS1</name>
<protein>
    <recommendedName>
        <fullName evidence="1">DNA ligase B</fullName>
        <ecNumber evidence="1">6.5.1.2</ecNumber>
    </recommendedName>
    <alternativeName>
        <fullName evidence="1">Polydeoxyribonucleotide synthase [NAD(+)] B</fullName>
    </alternativeName>
</protein>
<feature type="chain" id="PRO_0000313548" description="DNA ligase B">
    <location>
        <begin position="1"/>
        <end position="556"/>
    </location>
</feature>
<feature type="active site" description="N6-AMP-lysine intermediate" evidence="1">
    <location>
        <position position="126"/>
    </location>
</feature>
<organism>
    <name type="scientific">Stutzerimonas stutzeri (strain A1501)</name>
    <name type="common">Pseudomonas stutzeri</name>
    <dbReference type="NCBI Taxonomy" id="379731"/>
    <lineage>
        <taxon>Bacteria</taxon>
        <taxon>Pseudomonadati</taxon>
        <taxon>Pseudomonadota</taxon>
        <taxon>Gammaproteobacteria</taxon>
        <taxon>Pseudomonadales</taxon>
        <taxon>Pseudomonadaceae</taxon>
        <taxon>Stutzerimonas</taxon>
    </lineage>
</organism>